<reference key="1">
    <citation type="journal article" date="1993" name="Int. Immunol.">
        <title>Molecular cloning of cDNAs encoding a LD78 receptor and putative leukocyte chemotactic peptide receptors.</title>
        <authorList>
            <person name="Nomura H."/>
            <person name="Nielsen B.W."/>
            <person name="Matsushima K."/>
        </authorList>
    </citation>
    <scope>NUCLEOTIDE SEQUENCE [MRNA]</scope>
    <scope>VARIANTS PRO-173; LEU-198; ARG-253; MET-317 AND MET-346</scope>
    <source>
        <tissue>Monocyte</tissue>
    </source>
</reference>
<reference key="2">
    <citation type="submission" date="2001-07" db="EMBL/GenBank/DDBJ databases">
        <title>Genome-wide discovery and analysis of human seven transmembrane helix receptor genes.</title>
        <authorList>
            <person name="Suwa M."/>
            <person name="Sato T."/>
            <person name="Okouchi I."/>
            <person name="Arita M."/>
            <person name="Futami K."/>
            <person name="Matsumoto S."/>
            <person name="Tsutsumi S."/>
            <person name="Aburatani H."/>
            <person name="Asai K."/>
            <person name="Akiyama Y."/>
        </authorList>
    </citation>
    <scope>NUCLEOTIDE SEQUENCE [GENOMIC DNA]</scope>
    <scope>VARIANTS PRO-173; LEU-198; ARG-253; MET-317 AND MET-346</scope>
</reference>
<reference key="3">
    <citation type="journal article" date="2004" name="Nat. Genet.">
        <title>Complete sequencing and characterization of 21,243 full-length human cDNAs.</title>
        <authorList>
            <person name="Ota T."/>
            <person name="Suzuki Y."/>
            <person name="Nishikawa T."/>
            <person name="Otsuki T."/>
            <person name="Sugiyama T."/>
            <person name="Irie R."/>
            <person name="Wakamatsu A."/>
            <person name="Hayashi K."/>
            <person name="Sato H."/>
            <person name="Nagai K."/>
            <person name="Kimura K."/>
            <person name="Makita H."/>
            <person name="Sekine M."/>
            <person name="Obayashi M."/>
            <person name="Nishi T."/>
            <person name="Shibahara T."/>
            <person name="Tanaka T."/>
            <person name="Ishii S."/>
            <person name="Yamamoto J."/>
            <person name="Saito K."/>
            <person name="Kawai Y."/>
            <person name="Isono Y."/>
            <person name="Nakamura Y."/>
            <person name="Nagahari K."/>
            <person name="Murakami K."/>
            <person name="Yasuda T."/>
            <person name="Iwayanagi T."/>
            <person name="Wagatsuma M."/>
            <person name="Shiratori A."/>
            <person name="Sudo H."/>
            <person name="Hosoiri T."/>
            <person name="Kaku Y."/>
            <person name="Kodaira H."/>
            <person name="Kondo H."/>
            <person name="Sugawara M."/>
            <person name="Takahashi M."/>
            <person name="Kanda K."/>
            <person name="Yokoi T."/>
            <person name="Furuya T."/>
            <person name="Kikkawa E."/>
            <person name="Omura Y."/>
            <person name="Abe K."/>
            <person name="Kamihara K."/>
            <person name="Katsuta N."/>
            <person name="Sato K."/>
            <person name="Tanikawa M."/>
            <person name="Yamazaki M."/>
            <person name="Ninomiya K."/>
            <person name="Ishibashi T."/>
            <person name="Yamashita H."/>
            <person name="Murakawa K."/>
            <person name="Fujimori K."/>
            <person name="Tanai H."/>
            <person name="Kimata M."/>
            <person name="Watanabe M."/>
            <person name="Hiraoka S."/>
            <person name="Chiba Y."/>
            <person name="Ishida S."/>
            <person name="Ono Y."/>
            <person name="Takiguchi S."/>
            <person name="Watanabe S."/>
            <person name="Yosida M."/>
            <person name="Hotuta T."/>
            <person name="Kusano J."/>
            <person name="Kanehori K."/>
            <person name="Takahashi-Fujii A."/>
            <person name="Hara H."/>
            <person name="Tanase T.-O."/>
            <person name="Nomura Y."/>
            <person name="Togiya S."/>
            <person name="Komai F."/>
            <person name="Hara R."/>
            <person name="Takeuchi K."/>
            <person name="Arita M."/>
            <person name="Imose N."/>
            <person name="Musashino K."/>
            <person name="Yuuki H."/>
            <person name="Oshima A."/>
            <person name="Sasaki N."/>
            <person name="Aotsuka S."/>
            <person name="Yoshikawa Y."/>
            <person name="Matsunawa H."/>
            <person name="Ichihara T."/>
            <person name="Shiohata N."/>
            <person name="Sano S."/>
            <person name="Moriya S."/>
            <person name="Momiyama H."/>
            <person name="Satoh N."/>
            <person name="Takami S."/>
            <person name="Terashima Y."/>
            <person name="Suzuki O."/>
            <person name="Nakagawa S."/>
            <person name="Senoh A."/>
            <person name="Mizoguchi H."/>
            <person name="Goto Y."/>
            <person name="Shimizu F."/>
            <person name="Wakebe H."/>
            <person name="Hishigaki H."/>
            <person name="Watanabe T."/>
            <person name="Sugiyama A."/>
            <person name="Takemoto M."/>
            <person name="Kawakami B."/>
            <person name="Yamazaki M."/>
            <person name="Watanabe K."/>
            <person name="Kumagai A."/>
            <person name="Itakura S."/>
            <person name="Fukuzumi Y."/>
            <person name="Fujimori Y."/>
            <person name="Komiyama M."/>
            <person name="Tashiro H."/>
            <person name="Tanigami A."/>
            <person name="Fujiwara T."/>
            <person name="Ono T."/>
            <person name="Yamada K."/>
            <person name="Fujii Y."/>
            <person name="Ozaki K."/>
            <person name="Hirao M."/>
            <person name="Ohmori Y."/>
            <person name="Kawabata A."/>
            <person name="Hikiji T."/>
            <person name="Kobatake N."/>
            <person name="Inagaki H."/>
            <person name="Ikema Y."/>
            <person name="Okamoto S."/>
            <person name="Okitani R."/>
            <person name="Kawakami T."/>
            <person name="Noguchi S."/>
            <person name="Itoh T."/>
            <person name="Shigeta K."/>
            <person name="Senba T."/>
            <person name="Matsumura K."/>
            <person name="Nakajima Y."/>
            <person name="Mizuno T."/>
            <person name="Morinaga M."/>
            <person name="Sasaki M."/>
            <person name="Togashi T."/>
            <person name="Oyama M."/>
            <person name="Hata H."/>
            <person name="Watanabe M."/>
            <person name="Komatsu T."/>
            <person name="Mizushima-Sugano J."/>
            <person name="Satoh T."/>
            <person name="Shirai Y."/>
            <person name="Takahashi Y."/>
            <person name="Nakagawa K."/>
            <person name="Okumura K."/>
            <person name="Nagase T."/>
            <person name="Nomura N."/>
            <person name="Kikuchi H."/>
            <person name="Masuho Y."/>
            <person name="Yamashita R."/>
            <person name="Nakai K."/>
            <person name="Yada T."/>
            <person name="Nakamura Y."/>
            <person name="Ohara O."/>
            <person name="Isogai T."/>
            <person name="Sugano S."/>
        </authorList>
    </citation>
    <scope>NUCLEOTIDE SEQUENCE [LARGE SCALE MRNA]</scope>
    <scope>VARIANTS PRO-173; LEU-198; ARG-253; MET-317 AND MET-346</scope>
    <source>
        <tissue>Neutrophil</tissue>
    </source>
</reference>
<reference key="4">
    <citation type="submission" date="2007-11" db="EMBL/GenBank/DDBJ databases">
        <authorList>
            <consortium name="SeattleSNPs variation discovery resource"/>
        </authorList>
    </citation>
    <scope>NUCLEOTIDE SEQUENCE [GENOMIC DNA]</scope>
</reference>
<reference key="5">
    <citation type="journal article" date="2006" name="Nature">
        <title>The finished DNA sequence of human chromosome 12.</title>
        <authorList>
            <person name="Scherer S.E."/>
            <person name="Muzny D.M."/>
            <person name="Buhay C.J."/>
            <person name="Chen R."/>
            <person name="Cree A."/>
            <person name="Ding Y."/>
            <person name="Dugan-Rocha S."/>
            <person name="Gill R."/>
            <person name="Gunaratne P."/>
            <person name="Harris R.A."/>
            <person name="Hawes A.C."/>
            <person name="Hernandez J."/>
            <person name="Hodgson A.V."/>
            <person name="Hume J."/>
            <person name="Jackson A."/>
            <person name="Khan Z.M."/>
            <person name="Kovar-Smith C."/>
            <person name="Lewis L.R."/>
            <person name="Lozado R.J."/>
            <person name="Metzker M.L."/>
            <person name="Milosavljevic A."/>
            <person name="Miner G.R."/>
            <person name="Montgomery K.T."/>
            <person name="Morgan M.B."/>
            <person name="Nazareth L.V."/>
            <person name="Scott G."/>
            <person name="Sodergren E."/>
            <person name="Song X.-Z."/>
            <person name="Steffen D."/>
            <person name="Lovering R.C."/>
            <person name="Wheeler D.A."/>
            <person name="Worley K.C."/>
            <person name="Yuan Y."/>
            <person name="Zhang Z."/>
            <person name="Adams C.Q."/>
            <person name="Ansari-Lari M.A."/>
            <person name="Ayele M."/>
            <person name="Brown M.J."/>
            <person name="Chen G."/>
            <person name="Chen Z."/>
            <person name="Clerc-Blankenburg K.P."/>
            <person name="Davis C."/>
            <person name="Delgado O."/>
            <person name="Dinh H.H."/>
            <person name="Draper H."/>
            <person name="Gonzalez-Garay M.L."/>
            <person name="Havlak P."/>
            <person name="Jackson L.R."/>
            <person name="Jacob L.S."/>
            <person name="Kelly S.H."/>
            <person name="Li L."/>
            <person name="Li Z."/>
            <person name="Liu J."/>
            <person name="Liu W."/>
            <person name="Lu J."/>
            <person name="Maheshwari M."/>
            <person name="Nguyen B.-V."/>
            <person name="Okwuonu G.O."/>
            <person name="Pasternak S."/>
            <person name="Perez L.M."/>
            <person name="Plopper F.J.H."/>
            <person name="Santibanez J."/>
            <person name="Shen H."/>
            <person name="Tabor P.E."/>
            <person name="Verduzco D."/>
            <person name="Waldron L."/>
            <person name="Wang Q."/>
            <person name="Williams G.A."/>
            <person name="Zhang J."/>
            <person name="Zhou J."/>
            <person name="Allen C.C."/>
            <person name="Amin A.G."/>
            <person name="Anyalebechi V."/>
            <person name="Bailey M."/>
            <person name="Barbaria J.A."/>
            <person name="Bimage K.E."/>
            <person name="Bryant N.P."/>
            <person name="Burch P.E."/>
            <person name="Burkett C.E."/>
            <person name="Burrell K.L."/>
            <person name="Calderon E."/>
            <person name="Cardenas V."/>
            <person name="Carter K."/>
            <person name="Casias K."/>
            <person name="Cavazos I."/>
            <person name="Cavazos S.R."/>
            <person name="Ceasar H."/>
            <person name="Chacko J."/>
            <person name="Chan S.N."/>
            <person name="Chavez D."/>
            <person name="Christopoulos C."/>
            <person name="Chu J."/>
            <person name="Cockrell R."/>
            <person name="Cox C.D."/>
            <person name="Dang M."/>
            <person name="Dathorne S.R."/>
            <person name="David R."/>
            <person name="Davis C.M."/>
            <person name="Davy-Carroll L."/>
            <person name="Deshazo D.R."/>
            <person name="Donlin J.E."/>
            <person name="D'Souza L."/>
            <person name="Eaves K.A."/>
            <person name="Egan A."/>
            <person name="Emery-Cohen A.J."/>
            <person name="Escotto M."/>
            <person name="Flagg N."/>
            <person name="Forbes L.D."/>
            <person name="Gabisi A.M."/>
            <person name="Garza M."/>
            <person name="Hamilton C."/>
            <person name="Henderson N."/>
            <person name="Hernandez O."/>
            <person name="Hines S."/>
            <person name="Hogues M.E."/>
            <person name="Huang M."/>
            <person name="Idlebird D.G."/>
            <person name="Johnson R."/>
            <person name="Jolivet A."/>
            <person name="Jones S."/>
            <person name="Kagan R."/>
            <person name="King L.M."/>
            <person name="Leal B."/>
            <person name="Lebow H."/>
            <person name="Lee S."/>
            <person name="LeVan J.M."/>
            <person name="Lewis L.C."/>
            <person name="London P."/>
            <person name="Lorensuhewa L.M."/>
            <person name="Loulseged H."/>
            <person name="Lovett D.A."/>
            <person name="Lucier A."/>
            <person name="Lucier R.L."/>
            <person name="Ma J."/>
            <person name="Madu R.C."/>
            <person name="Mapua P."/>
            <person name="Martindale A.D."/>
            <person name="Martinez E."/>
            <person name="Massey E."/>
            <person name="Mawhiney S."/>
            <person name="Meador M.G."/>
            <person name="Mendez S."/>
            <person name="Mercado C."/>
            <person name="Mercado I.C."/>
            <person name="Merritt C.E."/>
            <person name="Miner Z.L."/>
            <person name="Minja E."/>
            <person name="Mitchell T."/>
            <person name="Mohabbat F."/>
            <person name="Mohabbat K."/>
            <person name="Montgomery B."/>
            <person name="Moore N."/>
            <person name="Morris S."/>
            <person name="Munidasa M."/>
            <person name="Ngo R.N."/>
            <person name="Nguyen N.B."/>
            <person name="Nickerson E."/>
            <person name="Nwaokelemeh O.O."/>
            <person name="Nwokenkwo S."/>
            <person name="Obregon M."/>
            <person name="Oguh M."/>
            <person name="Oragunye N."/>
            <person name="Oviedo R.J."/>
            <person name="Parish B.J."/>
            <person name="Parker D.N."/>
            <person name="Parrish J."/>
            <person name="Parks K.L."/>
            <person name="Paul H.A."/>
            <person name="Payton B.A."/>
            <person name="Perez A."/>
            <person name="Perrin W."/>
            <person name="Pickens A."/>
            <person name="Primus E.L."/>
            <person name="Pu L.-L."/>
            <person name="Puazo M."/>
            <person name="Quiles M.M."/>
            <person name="Quiroz J.B."/>
            <person name="Rabata D."/>
            <person name="Reeves K."/>
            <person name="Ruiz S.J."/>
            <person name="Shao H."/>
            <person name="Sisson I."/>
            <person name="Sonaike T."/>
            <person name="Sorelle R.P."/>
            <person name="Sutton A.E."/>
            <person name="Svatek A.F."/>
            <person name="Svetz L.A."/>
            <person name="Tamerisa K.S."/>
            <person name="Taylor T.R."/>
            <person name="Teague B."/>
            <person name="Thomas N."/>
            <person name="Thorn R.D."/>
            <person name="Trejos Z.Y."/>
            <person name="Trevino B.K."/>
            <person name="Ukegbu O.N."/>
            <person name="Urban J.B."/>
            <person name="Vasquez L.I."/>
            <person name="Vera V.A."/>
            <person name="Villasana D.M."/>
            <person name="Wang L."/>
            <person name="Ward-Moore S."/>
            <person name="Warren J.T."/>
            <person name="Wei X."/>
            <person name="White F."/>
            <person name="Williamson A.L."/>
            <person name="Wleczyk R."/>
            <person name="Wooden H.S."/>
            <person name="Wooden S.H."/>
            <person name="Yen J."/>
            <person name="Yoon L."/>
            <person name="Yoon V."/>
            <person name="Zorrilla S.E."/>
            <person name="Nelson D."/>
            <person name="Kucherlapati R."/>
            <person name="Weinstock G."/>
            <person name="Gibbs R.A."/>
        </authorList>
    </citation>
    <scope>NUCLEOTIDE SEQUENCE [LARGE SCALE GENOMIC DNA]</scope>
</reference>
<reference key="6">
    <citation type="journal article" date="2004" name="Genome Res.">
        <title>The status, quality, and expansion of the NIH full-length cDNA project: the Mammalian Gene Collection (MGC).</title>
        <authorList>
            <consortium name="The MGC Project Team"/>
        </authorList>
    </citation>
    <scope>NUCLEOTIDE SEQUENCE [LARGE SCALE MRNA]</scope>
    <scope>VARIANTS PRO-173; LEU-198; ARG-253; MET-317 AND MET-346</scope>
    <source>
        <tissue>Pancreas</tissue>
    </source>
</reference>
<reference key="7">
    <citation type="journal article" date="2003" name="J. Biol. Chem.">
        <title>Molecular identification of high and low affinity receptors for nicotinic acid.</title>
        <authorList>
            <person name="Wise A."/>
            <person name="Foord S.M."/>
            <person name="Fraser N.J."/>
            <person name="Barnes A.A."/>
            <person name="Elshourbagy N."/>
            <person name="Eilert M."/>
            <person name="Ignar D.M."/>
            <person name="Murdock P.R."/>
            <person name="Steplewski K."/>
            <person name="Green A."/>
            <person name="Brown A.J."/>
            <person name="Dowell S.J."/>
            <person name="Szekeres P.G."/>
            <person name="Hassall D.G."/>
            <person name="Marshall F.H."/>
            <person name="Wilson S."/>
            <person name="Pike N.B."/>
        </authorList>
    </citation>
    <scope>FUNCTION</scope>
    <scope>TISSUE SPECIFICITY</scope>
    <scope>CHARACTERIZATION</scope>
</reference>
<reference key="8">
    <citation type="journal article" date="2009" name="J. Biol. Chem.">
        <title>Deorphanization of GPR109B as a receptor for the beta-oxidation intermediate 3-OH-octanoic acid and its role in the regulation of lipolysis.</title>
        <authorList>
            <person name="Ahmed K."/>
            <person name="Tunaru S."/>
            <person name="Langhans C.-D."/>
            <person name="Hanson J."/>
            <person name="Michalski C.W."/>
            <person name="Koelker S."/>
            <person name="Jones P.M."/>
            <person name="Okun J.G."/>
            <person name="Offermanns S."/>
        </authorList>
    </citation>
    <scope>FUNCTION</scope>
    <scope>MUTAGENESIS OF ARG-111</scope>
</reference>
<reference key="9">
    <citation type="journal article" date="2011" name="Pharmacol. Rev.">
        <title>International union of basic and clinical pharmacology. LXXXII: nomenclature and classification of hydroxy-carboxylic acid receptors (GPR81, GPR109A, and GPR109B).</title>
        <authorList>
            <person name="Offermanns S."/>
            <person name="Colletti S.L."/>
            <person name="Lovenberg T.W."/>
            <person name="Semple G."/>
            <person name="Wise A."/>
            <person name="Ijzerman A.P."/>
        </authorList>
    </citation>
    <scope>NOMENCLATURE</scope>
</reference>
<gene>
    <name type="primary">HCAR3</name>
    <name type="synonym">GPR109B</name>
    <name type="synonym">HCA3</name>
    <name type="synonym">HM74B</name>
    <name type="synonym">NIACR2</name>
</gene>
<dbReference type="EMBL" id="D10923">
    <property type="protein sequence ID" value="BAA01721.1"/>
    <property type="molecule type" value="mRNA"/>
</dbReference>
<dbReference type="EMBL" id="AB065865">
    <property type="protein sequence ID" value="BAC06083.1"/>
    <property type="molecule type" value="Genomic_DNA"/>
</dbReference>
<dbReference type="EMBL" id="AK290930">
    <property type="protein sequence ID" value="BAF83619.1"/>
    <property type="molecule type" value="mRNA"/>
</dbReference>
<dbReference type="EMBL" id="AK313212">
    <property type="protein sequence ID" value="BAG36027.1"/>
    <property type="molecule type" value="mRNA"/>
</dbReference>
<dbReference type="EMBL" id="EU293604">
    <property type="protein sequence ID" value="ABX64359.1"/>
    <property type="molecule type" value="Genomic_DNA"/>
</dbReference>
<dbReference type="EMBL" id="AC026333">
    <property type="status" value="NOT_ANNOTATED_CDS"/>
    <property type="molecule type" value="Genomic_DNA"/>
</dbReference>
<dbReference type="EMBL" id="BC047891">
    <property type="protein sequence ID" value="AAH47891.1"/>
    <property type="molecule type" value="mRNA"/>
</dbReference>
<dbReference type="CCDS" id="CCDS53842.1"/>
<dbReference type="PIR" id="I69202">
    <property type="entry name" value="I69202"/>
</dbReference>
<dbReference type="RefSeq" id="NP_006009.2">
    <property type="nucleotide sequence ID" value="NM_006018.3"/>
</dbReference>
<dbReference type="PDB" id="8IHJ">
    <property type="method" value="EM"/>
    <property type="resolution" value="3.07 A"/>
    <property type="chains" value="R=2-387"/>
</dbReference>
<dbReference type="PDB" id="8IHK">
    <property type="method" value="EM"/>
    <property type="resolution" value="3.21 A"/>
    <property type="chains" value="R=2-387"/>
</dbReference>
<dbReference type="PDB" id="8JEF">
    <property type="method" value="EM"/>
    <property type="resolution" value="2.96 A"/>
    <property type="chains" value="A=1-387"/>
</dbReference>
<dbReference type="PDB" id="8JEI">
    <property type="method" value="EM"/>
    <property type="resolution" value="2.73 A"/>
    <property type="chains" value="A=1-387"/>
</dbReference>
<dbReference type="PDBsum" id="8IHJ"/>
<dbReference type="PDBsum" id="8IHK"/>
<dbReference type="PDBsum" id="8JEF"/>
<dbReference type="PDBsum" id="8JEI"/>
<dbReference type="EMDB" id="EMD-35446"/>
<dbReference type="EMDB" id="EMD-35447"/>
<dbReference type="EMDB" id="EMD-36186"/>
<dbReference type="EMDB" id="EMD-36189"/>
<dbReference type="SMR" id="P49019"/>
<dbReference type="CORUM" id="P49019"/>
<dbReference type="FunCoup" id="P49019">
    <property type="interactions" value="539"/>
</dbReference>
<dbReference type="IntAct" id="P49019">
    <property type="interactions" value="1"/>
</dbReference>
<dbReference type="STRING" id="9606.ENSP00000436714"/>
<dbReference type="BindingDB" id="P49019"/>
<dbReference type="ChEMBL" id="CHEMBL4421"/>
<dbReference type="DrugBank" id="DB03225">
    <property type="generic name" value="D-Tryptophan"/>
</dbReference>
<dbReference type="DrugBank" id="DB08949">
    <property type="generic name" value="Inositol nicotinate"/>
</dbReference>
<dbReference type="DrugBank" id="DB00627">
    <property type="generic name" value="Niacin"/>
</dbReference>
<dbReference type="DrugCentral" id="P49019"/>
<dbReference type="GuidetoPHARMACOLOGY" id="313"/>
<dbReference type="TCDB" id="9.A.14.13.43">
    <property type="family name" value="the g-protein-coupled receptor (gpcr) family"/>
</dbReference>
<dbReference type="iPTMnet" id="P49019"/>
<dbReference type="PhosphoSitePlus" id="P49019"/>
<dbReference type="BioMuta" id="HCAR3"/>
<dbReference type="DMDM" id="519668680"/>
<dbReference type="jPOST" id="P49019"/>
<dbReference type="MassIVE" id="P49019"/>
<dbReference type="PaxDb" id="9606-ENSP00000436714"/>
<dbReference type="PeptideAtlas" id="P49019"/>
<dbReference type="ProteomicsDB" id="20737"/>
<dbReference type="ProteomicsDB" id="55956"/>
<dbReference type="Antibodypedia" id="53056">
    <property type="antibodies" value="197 antibodies from 26 providers"/>
</dbReference>
<dbReference type="DNASU" id="8843"/>
<dbReference type="Ensembl" id="ENST00000528880.3">
    <property type="protein sequence ID" value="ENSP00000436714.2"/>
    <property type="gene ID" value="ENSG00000255398.3"/>
</dbReference>
<dbReference type="GeneID" id="8843"/>
<dbReference type="KEGG" id="hsa:8843"/>
<dbReference type="MANE-Select" id="ENST00000528880.3">
    <property type="protein sequence ID" value="ENSP00000436714.2"/>
    <property type="RefSeq nucleotide sequence ID" value="NM_006018.3"/>
    <property type="RefSeq protein sequence ID" value="NP_006009.2"/>
</dbReference>
<dbReference type="UCSC" id="uc001ucy.4">
    <property type="organism name" value="human"/>
</dbReference>
<dbReference type="AGR" id="HGNC:16824"/>
<dbReference type="CTD" id="8843"/>
<dbReference type="DisGeNET" id="8843"/>
<dbReference type="GeneCards" id="HCAR3"/>
<dbReference type="HGNC" id="HGNC:16824">
    <property type="gene designation" value="HCAR3"/>
</dbReference>
<dbReference type="HPA" id="ENSG00000255398">
    <property type="expression patterns" value="Tissue enhanced (bone marrow, esophagus, lymphoid tissue, skin)"/>
</dbReference>
<dbReference type="MIM" id="606039">
    <property type="type" value="gene"/>
</dbReference>
<dbReference type="neXtProt" id="NX_P49019"/>
<dbReference type="OpenTargets" id="ENSG00000255398"/>
<dbReference type="PharmGKB" id="PA165512827"/>
<dbReference type="VEuPathDB" id="HostDB:ENSG00000255398"/>
<dbReference type="eggNOG" id="KOG3656">
    <property type="taxonomic scope" value="Eukaryota"/>
</dbReference>
<dbReference type="GeneTree" id="ENSGT00990000203619"/>
<dbReference type="HOGENOM" id="CLU_009579_8_2_1"/>
<dbReference type="InParanoid" id="P49019"/>
<dbReference type="OMA" id="KWDWKFG"/>
<dbReference type="OrthoDB" id="10055255at2759"/>
<dbReference type="PAN-GO" id="P49019">
    <property type="GO annotations" value="3 GO annotations based on evolutionary models"/>
</dbReference>
<dbReference type="PhylomeDB" id="P49019"/>
<dbReference type="TreeFam" id="TF330775"/>
<dbReference type="PathwayCommons" id="P49019"/>
<dbReference type="Reactome" id="R-HSA-3296197">
    <property type="pathway name" value="Hydroxycarboxylic acid-binding receptors"/>
</dbReference>
<dbReference type="Reactome" id="R-HSA-418594">
    <property type="pathway name" value="G alpha (i) signalling events"/>
</dbReference>
<dbReference type="SignaLink" id="P49019"/>
<dbReference type="BioGRID-ORCS" id="8843">
    <property type="hits" value="10 hits in 1100 CRISPR screens"/>
</dbReference>
<dbReference type="GenomeRNAi" id="8843"/>
<dbReference type="Pharos" id="P49019">
    <property type="development level" value="Tchem"/>
</dbReference>
<dbReference type="PRO" id="PR:P49019"/>
<dbReference type="Proteomes" id="UP000005640">
    <property type="component" value="Chromosome 12"/>
</dbReference>
<dbReference type="RNAct" id="P49019">
    <property type="molecule type" value="protein"/>
</dbReference>
<dbReference type="Bgee" id="ENSG00000255398">
    <property type="expression patterns" value="Expressed in blood and 78 other cell types or tissues"/>
</dbReference>
<dbReference type="GO" id="GO:0030054">
    <property type="term" value="C:cell junction"/>
    <property type="evidence" value="ECO:0000314"/>
    <property type="project" value="HPA"/>
</dbReference>
<dbReference type="GO" id="GO:0005886">
    <property type="term" value="C:plasma membrane"/>
    <property type="evidence" value="ECO:0000318"/>
    <property type="project" value="GO_Central"/>
</dbReference>
<dbReference type="GO" id="GO:0004930">
    <property type="term" value="F:G protein-coupled receptor activity"/>
    <property type="evidence" value="ECO:0000304"/>
    <property type="project" value="ProtInc"/>
</dbReference>
<dbReference type="GO" id="GO:0070553">
    <property type="term" value="F:nicotinic acid receptor activity"/>
    <property type="evidence" value="ECO:0000318"/>
    <property type="project" value="GO_Central"/>
</dbReference>
<dbReference type="GO" id="GO:0007186">
    <property type="term" value="P:G protein-coupled receptor signaling pathway"/>
    <property type="evidence" value="ECO:0000318"/>
    <property type="project" value="GO_Central"/>
</dbReference>
<dbReference type="CDD" id="cd15201">
    <property type="entry name" value="7tmA_HCAR1-3"/>
    <property type="match status" value="1"/>
</dbReference>
<dbReference type="FunFam" id="1.20.1070.10:FF:000241">
    <property type="entry name" value="Hydroxycarboxylic acid receptor 1"/>
    <property type="match status" value="1"/>
</dbReference>
<dbReference type="Gene3D" id="1.20.1070.10">
    <property type="entry name" value="Rhodopsin 7-helix transmembrane proteins"/>
    <property type="match status" value="1"/>
</dbReference>
<dbReference type="InterPro" id="IPR000276">
    <property type="entry name" value="GPCR_Rhodpsn"/>
</dbReference>
<dbReference type="InterPro" id="IPR017452">
    <property type="entry name" value="GPCR_Rhodpsn_7TM"/>
</dbReference>
<dbReference type="InterPro" id="IPR051893">
    <property type="entry name" value="HCARs"/>
</dbReference>
<dbReference type="PANTHER" id="PTHR46048">
    <property type="entry name" value="HYDROXYCARBOXYLIC ACID RECEPTOR 2"/>
    <property type="match status" value="1"/>
</dbReference>
<dbReference type="PANTHER" id="PTHR46048:SF5">
    <property type="entry name" value="HYDROXYCARBOXYLIC ACID RECEPTOR 3"/>
    <property type="match status" value="1"/>
</dbReference>
<dbReference type="Pfam" id="PF00001">
    <property type="entry name" value="7tm_1"/>
    <property type="match status" value="1"/>
</dbReference>
<dbReference type="PRINTS" id="PR00237">
    <property type="entry name" value="GPCRRHODOPSN"/>
</dbReference>
<dbReference type="PRINTS" id="PR01157">
    <property type="entry name" value="P2YPURNOCPTR"/>
</dbReference>
<dbReference type="SUPFAM" id="SSF81321">
    <property type="entry name" value="Family A G protein-coupled receptor-like"/>
    <property type="match status" value="1"/>
</dbReference>
<dbReference type="PROSITE" id="PS00237">
    <property type="entry name" value="G_PROTEIN_RECEP_F1_1"/>
    <property type="match status" value="1"/>
</dbReference>
<dbReference type="PROSITE" id="PS50262">
    <property type="entry name" value="G_PROTEIN_RECEP_F1_2"/>
    <property type="match status" value="1"/>
</dbReference>
<protein>
    <recommendedName>
        <fullName>Hydroxycarboxylic acid receptor 3</fullName>
    </recommendedName>
    <alternativeName>
        <fullName>G-protein coupled receptor 109B</fullName>
    </alternativeName>
    <alternativeName>
        <fullName>G-protein coupled receptor HM74</fullName>
    </alternativeName>
    <alternativeName>
        <fullName>G-protein coupled receptor HM74B</fullName>
    </alternativeName>
    <alternativeName>
        <fullName>Niacin receptor 2</fullName>
    </alternativeName>
    <alternativeName>
        <fullName>Nicotinic acid receptor 2</fullName>
    </alternativeName>
</protein>
<proteinExistence type="evidence at protein level"/>
<organism>
    <name type="scientific">Homo sapiens</name>
    <name type="common">Human</name>
    <dbReference type="NCBI Taxonomy" id="9606"/>
    <lineage>
        <taxon>Eukaryota</taxon>
        <taxon>Metazoa</taxon>
        <taxon>Chordata</taxon>
        <taxon>Craniata</taxon>
        <taxon>Vertebrata</taxon>
        <taxon>Euteleostomi</taxon>
        <taxon>Mammalia</taxon>
        <taxon>Eutheria</taxon>
        <taxon>Euarchontoglires</taxon>
        <taxon>Primates</taxon>
        <taxon>Haplorrhini</taxon>
        <taxon>Catarrhini</taxon>
        <taxon>Hominidae</taxon>
        <taxon>Homo</taxon>
    </lineage>
</organism>
<evidence type="ECO:0000255" key="1"/>
<evidence type="ECO:0000255" key="2">
    <source>
        <dbReference type="PROSITE-ProRule" id="PRU00521"/>
    </source>
</evidence>
<evidence type="ECO:0000256" key="3">
    <source>
        <dbReference type="SAM" id="MobiDB-lite"/>
    </source>
</evidence>
<evidence type="ECO:0000269" key="4">
    <source>
    </source>
</evidence>
<evidence type="ECO:0000269" key="5">
    <source>
    </source>
</evidence>
<evidence type="ECO:0000269" key="6">
    <source>
    </source>
</evidence>
<evidence type="ECO:0000269" key="7">
    <source>
    </source>
</evidence>
<evidence type="ECO:0000269" key="8">
    <source>
    </source>
</evidence>
<evidence type="ECO:0000269" key="9">
    <source ref="2"/>
</evidence>
<evidence type="ECO:0000305" key="10"/>
<evidence type="ECO:0007829" key="11">
    <source>
        <dbReference type="PDB" id="8IHJ"/>
    </source>
</evidence>
<evidence type="ECO:0007829" key="12">
    <source>
        <dbReference type="PDB" id="8JEI"/>
    </source>
</evidence>
<comment type="function">
    <text evidence="4 7">Receptor for 3-OH-octanoid acid mediates a negative feedback regulation of adipocyte lipolysis to counteract prolipolytic influences under conditions of physiological or pathological increases in beta-oxidation rates. Acts as a low affinity receptor for nicotinic acid. This pharmacological effect requires nicotinic acid doses that are much higher than those provided by a normal diet.</text>
</comment>
<comment type="subcellular location">
    <subcellularLocation>
        <location>Cell membrane</location>
        <topology>Multi-pass membrane protein</topology>
    </subcellularLocation>
</comment>
<comment type="tissue specificity">
    <text evidence="4">Expression largely restricted to adipose tissue and spleen.</text>
</comment>
<comment type="similarity">
    <text evidence="2">Belongs to the G-protein coupled receptor 1 family.</text>
</comment>
<keyword id="KW-0002">3D-structure</keyword>
<keyword id="KW-1003">Cell membrane</keyword>
<keyword id="KW-1015">Disulfide bond</keyword>
<keyword id="KW-0297">G-protein coupled receptor</keyword>
<keyword id="KW-0472">Membrane</keyword>
<keyword id="KW-1267">Proteomics identification</keyword>
<keyword id="KW-0675">Receptor</keyword>
<keyword id="KW-1185">Reference proteome</keyword>
<keyword id="KW-0807">Transducer</keyword>
<keyword id="KW-0812">Transmembrane</keyword>
<keyword id="KW-1133">Transmembrane helix</keyword>
<name>HCAR3_HUMAN</name>
<sequence>MNRHHLQDHFLEIDKKNCCVFRDDFIAKVLPPVLGLEFIFGLLGNGLALWIFCFHLKSWKSSRIFLFNLAVADFLLIICLPFVMDYYVRRSDWKFGDIPCRLVLFMFAMNRQGSIIFLTVVAVDRYFRVVHPHHALNKISNWTAAIISCLLWGITVGLTVHLLKKKLLIQNGTANVCISFSICHTFRWHEAMFLLEFFLPLGIILFCSARIIWSLRQRQMDRHAKIKRAITFIMVVAIVFVICFLPSVVVRIHIFWLLHTSGTQNCEVYRSVDLAFFITLSFTYMNSMLDPVVYYFSSPSFPNFFSTLINRCLQRKITGEPDNNRSTSVELTGDPNKTRGAPEALIANSGEPWSPSYLGPTSNNHSKKGHCHQEPASLEKQLGCCIE</sequence>
<accession>P49019</accession>
<accession>A8K4G5</accession>
<accession>B2R830</accession>
<accession>E9PI97</accession>
<accession>Q8NGE4</accession>
<feature type="chain" id="PRO_0000069604" description="Hydroxycarboxylic acid receptor 3">
    <location>
        <begin position="1"/>
        <end position="387"/>
    </location>
</feature>
<feature type="topological domain" description="Extracellular" evidence="1">
    <location>
        <begin position="1"/>
        <end position="28"/>
    </location>
</feature>
<feature type="transmembrane region" description="Helical; Name=1" evidence="1">
    <location>
        <begin position="29"/>
        <end position="50"/>
    </location>
</feature>
<feature type="topological domain" description="Cytoplasmic" evidence="1">
    <location>
        <begin position="51"/>
        <end position="63"/>
    </location>
</feature>
<feature type="transmembrane region" description="Helical; Name=2" evidence="1">
    <location>
        <begin position="64"/>
        <end position="85"/>
    </location>
</feature>
<feature type="topological domain" description="Extracellular" evidence="1">
    <location>
        <begin position="86"/>
        <end position="102"/>
    </location>
</feature>
<feature type="transmembrane region" description="Helical; Name=3" evidence="1">
    <location>
        <begin position="103"/>
        <end position="123"/>
    </location>
</feature>
<feature type="topological domain" description="Cytoplasmic" evidence="1">
    <location>
        <begin position="124"/>
        <end position="142"/>
    </location>
</feature>
<feature type="transmembrane region" description="Helical; Name=4" evidence="1">
    <location>
        <begin position="143"/>
        <end position="163"/>
    </location>
</feature>
<feature type="topological domain" description="Extracellular" evidence="1">
    <location>
        <begin position="164"/>
        <end position="194"/>
    </location>
</feature>
<feature type="transmembrane region" description="Helical; Name=5" evidence="1">
    <location>
        <begin position="195"/>
        <end position="209"/>
    </location>
</feature>
<feature type="topological domain" description="Cytoplasmic" evidence="1">
    <location>
        <begin position="210"/>
        <end position="236"/>
    </location>
</feature>
<feature type="transmembrane region" description="Helical; Name=6" evidence="1">
    <location>
        <begin position="237"/>
        <end position="256"/>
    </location>
</feature>
<feature type="topological domain" description="Extracellular" evidence="1">
    <location>
        <begin position="257"/>
        <end position="273"/>
    </location>
</feature>
<feature type="transmembrane region" description="Helical; Name=7" evidence="1">
    <location>
        <begin position="274"/>
        <end position="298"/>
    </location>
</feature>
<feature type="topological domain" description="Cytoplasmic" evidence="1">
    <location>
        <begin position="299"/>
        <end position="387"/>
    </location>
</feature>
<feature type="region of interest" description="Disordered" evidence="3">
    <location>
        <begin position="319"/>
        <end position="343"/>
    </location>
</feature>
<feature type="disulfide bond" evidence="2">
    <location>
        <begin position="100"/>
        <end position="177"/>
    </location>
</feature>
<feature type="sequence variant" id="VAR_038715" description="In dbSNP:rs1798192." evidence="5 6 8 9">
    <original>T</original>
    <variation>P</variation>
    <location>
        <position position="173"/>
    </location>
</feature>
<feature type="sequence variant" id="VAR_038716" description="In dbSNP:rs17884481." evidence="5 6 8 9">
    <original>F</original>
    <variation>L</variation>
    <location>
        <position position="198"/>
    </location>
</feature>
<feature type="sequence variant" id="VAR_038717" description="In dbSNP:rs118091133." evidence="5 6 8 9">
    <original>H</original>
    <variation>R</variation>
    <location>
        <position position="253"/>
    </location>
</feature>
<feature type="sequence variant" id="VAR_038718" description="In dbSNP:rs116821988." evidence="5 6 8 9">
    <original>I</original>
    <variation>M</variation>
    <location>
        <position position="317"/>
    </location>
</feature>
<feature type="sequence variant" id="VAR_038719" description="In dbSNP:rs1696351." evidence="5 6 8 9">
    <original>I</original>
    <variation>M</variation>
    <location>
        <position position="346"/>
    </location>
</feature>
<feature type="sequence variant" id="VAR_038720" description="In dbSNP:rs201835480.">
    <original>G</original>
    <variation>S</variation>
    <location>
        <position position="350"/>
    </location>
</feature>
<feature type="mutagenesis site" description="Abrogates completely the activation by OH-octanoid acid." evidence="7">
    <original>R</original>
    <variation>A</variation>
    <location>
        <position position="111"/>
    </location>
</feature>
<feature type="sequence conflict" description="In Ref. 1; BAA01721." evidence="10" ref="1">
    <original>K</original>
    <variation>N</variation>
    <location>
        <position position="94"/>
    </location>
</feature>
<feature type="helix" evidence="12">
    <location>
        <begin position="24"/>
        <end position="40"/>
    </location>
</feature>
<feature type="helix" evidence="12">
    <location>
        <begin position="43"/>
        <end position="53"/>
    </location>
</feature>
<feature type="helix" evidence="12">
    <location>
        <begin position="61"/>
        <end position="88"/>
    </location>
</feature>
<feature type="turn" evidence="12">
    <location>
        <begin position="89"/>
        <end position="91"/>
    </location>
</feature>
<feature type="helix" evidence="12">
    <location>
        <begin position="97"/>
        <end position="130"/>
    </location>
</feature>
<feature type="helix" evidence="12">
    <location>
        <begin position="135"/>
        <end position="138"/>
    </location>
</feature>
<feature type="helix" evidence="12">
    <location>
        <begin position="141"/>
        <end position="164"/>
    </location>
</feature>
<feature type="strand" evidence="11">
    <location>
        <begin position="169"/>
        <end position="171"/>
    </location>
</feature>
<feature type="strand" evidence="11">
    <location>
        <begin position="174"/>
        <end position="176"/>
    </location>
</feature>
<feature type="helix" evidence="12">
    <location>
        <begin position="188"/>
        <end position="195"/>
    </location>
</feature>
<feature type="turn" evidence="12">
    <location>
        <begin position="196"/>
        <end position="198"/>
    </location>
</feature>
<feature type="helix" evidence="12">
    <location>
        <begin position="199"/>
        <end position="217"/>
    </location>
</feature>
<feature type="helix" evidence="12">
    <location>
        <begin position="224"/>
        <end position="260"/>
    </location>
</feature>
<feature type="helix" evidence="12">
    <location>
        <begin position="270"/>
        <end position="293"/>
    </location>
</feature>
<feature type="turn" evidence="12">
    <location>
        <begin position="294"/>
        <end position="297"/>
    </location>
</feature>